<name>THIC_CLONN</name>
<sequence>MNYTTQMDAAKRGIVTKEMEIVAKKECMEISKLMNLVATGQVAIPANKNHKSLSPEGVGQDLKTKINVNLGISKDCYNIDAELEKVKKAVEMKAEAIMDLSCYGKTEEFRRKLIDMSPAMIGTVPMYDAIGFYDKELKDITAEELLAVVEKHAKDGVDFMTIHCGINRETAEVFKRNPRLMNLVSRGGSLLFAWMQLNNKENPFYEHFDKVLDICEKYDVTISLGDACRPGCIEDSTDPSQIKELITLGELTKRAWERNVQIIIEGPGHMSLSEIKTNMLLEKKLCHNAPFYVLGPIVTDVAPGYDHITSAIGGAIAASFGADFLCYVTPAEHLRLPNIDDMKEGIIATKIAAHAADIAKGIPGARDWDNKMSRARRDLDWDTMFELAIDPEKAKRYRAESIPEDEHTCTMCGKMCAVRNMNKVMDGKNINILREDD</sequence>
<feature type="chain" id="PRO_1000057591" description="Phosphomethylpyrimidine synthase">
    <location>
        <begin position="1"/>
        <end position="437"/>
    </location>
</feature>
<feature type="binding site" evidence="1">
    <location>
        <position position="69"/>
    </location>
    <ligand>
        <name>substrate</name>
    </ligand>
</feature>
<feature type="binding site" evidence="1">
    <location>
        <position position="98"/>
    </location>
    <ligand>
        <name>substrate</name>
    </ligand>
</feature>
<feature type="binding site" evidence="1">
    <location>
        <position position="127"/>
    </location>
    <ligand>
        <name>substrate</name>
    </ligand>
</feature>
<feature type="binding site" evidence="1">
    <location>
        <position position="163"/>
    </location>
    <ligand>
        <name>substrate</name>
    </ligand>
</feature>
<feature type="binding site" evidence="1">
    <location>
        <begin position="185"/>
        <end position="187"/>
    </location>
    <ligand>
        <name>substrate</name>
    </ligand>
</feature>
<feature type="binding site" evidence="1">
    <location>
        <begin position="226"/>
        <end position="229"/>
    </location>
    <ligand>
        <name>substrate</name>
    </ligand>
</feature>
<feature type="binding site" evidence="1">
    <location>
        <position position="265"/>
    </location>
    <ligand>
        <name>substrate</name>
    </ligand>
</feature>
<feature type="binding site" evidence="1">
    <location>
        <position position="269"/>
    </location>
    <ligand>
        <name>Zn(2+)</name>
        <dbReference type="ChEBI" id="CHEBI:29105"/>
    </ligand>
</feature>
<feature type="binding site" evidence="1">
    <location>
        <position position="292"/>
    </location>
    <ligand>
        <name>substrate</name>
    </ligand>
</feature>
<feature type="binding site" evidence="1">
    <location>
        <position position="333"/>
    </location>
    <ligand>
        <name>Zn(2+)</name>
        <dbReference type="ChEBI" id="CHEBI:29105"/>
    </ligand>
</feature>
<feature type="binding site" evidence="1">
    <location>
        <position position="409"/>
    </location>
    <ligand>
        <name>[4Fe-4S] cluster</name>
        <dbReference type="ChEBI" id="CHEBI:49883"/>
        <note>4Fe-4S-S-AdoMet</note>
    </ligand>
</feature>
<feature type="binding site" evidence="1">
    <location>
        <position position="412"/>
    </location>
    <ligand>
        <name>[4Fe-4S] cluster</name>
        <dbReference type="ChEBI" id="CHEBI:49883"/>
        <note>4Fe-4S-S-AdoMet</note>
    </ligand>
</feature>
<feature type="binding site" evidence="1">
    <location>
        <position position="416"/>
    </location>
    <ligand>
        <name>[4Fe-4S] cluster</name>
        <dbReference type="ChEBI" id="CHEBI:49883"/>
        <note>4Fe-4S-S-AdoMet</note>
    </ligand>
</feature>
<comment type="function">
    <text evidence="1">Catalyzes the synthesis of the hydroxymethylpyrimidine phosphate (HMP-P) moiety of thiamine from aminoimidazole ribotide (AIR) in a radical S-adenosyl-L-methionine (SAM)-dependent reaction.</text>
</comment>
<comment type="catalytic activity">
    <reaction evidence="1">
        <text>5-amino-1-(5-phospho-beta-D-ribosyl)imidazole + S-adenosyl-L-methionine = 4-amino-2-methyl-5-(phosphooxymethyl)pyrimidine + CO + 5'-deoxyadenosine + formate + L-methionine + 3 H(+)</text>
        <dbReference type="Rhea" id="RHEA:24840"/>
        <dbReference type="ChEBI" id="CHEBI:15378"/>
        <dbReference type="ChEBI" id="CHEBI:15740"/>
        <dbReference type="ChEBI" id="CHEBI:17245"/>
        <dbReference type="ChEBI" id="CHEBI:17319"/>
        <dbReference type="ChEBI" id="CHEBI:57844"/>
        <dbReference type="ChEBI" id="CHEBI:58354"/>
        <dbReference type="ChEBI" id="CHEBI:59789"/>
        <dbReference type="ChEBI" id="CHEBI:137981"/>
        <dbReference type="EC" id="4.1.99.17"/>
    </reaction>
</comment>
<comment type="cofactor">
    <cofactor evidence="1">
        <name>[4Fe-4S] cluster</name>
        <dbReference type="ChEBI" id="CHEBI:49883"/>
    </cofactor>
    <text evidence="1">Binds 1 [4Fe-4S] cluster per subunit. The cluster is coordinated with 3 cysteines and an exchangeable S-adenosyl-L-methionine.</text>
</comment>
<comment type="pathway">
    <text evidence="1">Cofactor biosynthesis; thiamine diphosphate biosynthesis.</text>
</comment>
<comment type="similarity">
    <text evidence="1">Belongs to the ThiC family.</text>
</comment>
<dbReference type="EC" id="4.1.99.17" evidence="1"/>
<dbReference type="EMBL" id="CP000382">
    <property type="protein sequence ID" value="ABK62277.1"/>
    <property type="molecule type" value="Genomic_DNA"/>
</dbReference>
<dbReference type="RefSeq" id="WP_011722591.1">
    <property type="nucleotide sequence ID" value="NC_008593.1"/>
</dbReference>
<dbReference type="SMR" id="A0Q1U9"/>
<dbReference type="STRING" id="386415.NT01CX_0092"/>
<dbReference type="KEGG" id="cno:NT01CX_0092"/>
<dbReference type="PATRIC" id="fig|386415.7.peg.1632"/>
<dbReference type="eggNOG" id="COG0422">
    <property type="taxonomic scope" value="Bacteria"/>
</dbReference>
<dbReference type="HOGENOM" id="CLU_013181_2_1_9"/>
<dbReference type="UniPathway" id="UPA00060"/>
<dbReference type="Proteomes" id="UP000008220">
    <property type="component" value="Chromosome"/>
</dbReference>
<dbReference type="GO" id="GO:0005829">
    <property type="term" value="C:cytosol"/>
    <property type="evidence" value="ECO:0007669"/>
    <property type="project" value="TreeGrafter"/>
</dbReference>
<dbReference type="GO" id="GO:0051539">
    <property type="term" value="F:4 iron, 4 sulfur cluster binding"/>
    <property type="evidence" value="ECO:0007669"/>
    <property type="project" value="UniProtKB-KW"/>
</dbReference>
<dbReference type="GO" id="GO:0016830">
    <property type="term" value="F:carbon-carbon lyase activity"/>
    <property type="evidence" value="ECO:0007669"/>
    <property type="project" value="InterPro"/>
</dbReference>
<dbReference type="GO" id="GO:0008270">
    <property type="term" value="F:zinc ion binding"/>
    <property type="evidence" value="ECO:0007669"/>
    <property type="project" value="UniProtKB-UniRule"/>
</dbReference>
<dbReference type="GO" id="GO:0009228">
    <property type="term" value="P:thiamine biosynthetic process"/>
    <property type="evidence" value="ECO:0007669"/>
    <property type="project" value="UniProtKB-KW"/>
</dbReference>
<dbReference type="GO" id="GO:0009229">
    <property type="term" value="P:thiamine diphosphate biosynthetic process"/>
    <property type="evidence" value="ECO:0007669"/>
    <property type="project" value="UniProtKB-UniRule"/>
</dbReference>
<dbReference type="FunFam" id="3.20.20.540:FF:000001">
    <property type="entry name" value="Phosphomethylpyrimidine synthase"/>
    <property type="match status" value="1"/>
</dbReference>
<dbReference type="Gene3D" id="6.10.250.620">
    <property type="match status" value="1"/>
</dbReference>
<dbReference type="Gene3D" id="3.20.20.540">
    <property type="entry name" value="Radical SAM ThiC family, central domain"/>
    <property type="match status" value="1"/>
</dbReference>
<dbReference type="HAMAP" id="MF_00089">
    <property type="entry name" value="ThiC"/>
    <property type="match status" value="1"/>
</dbReference>
<dbReference type="InterPro" id="IPR037509">
    <property type="entry name" value="ThiC"/>
</dbReference>
<dbReference type="InterPro" id="IPR038521">
    <property type="entry name" value="ThiC/Bza_core_dom"/>
</dbReference>
<dbReference type="InterPro" id="IPR002817">
    <property type="entry name" value="ThiC/BzaA/B"/>
</dbReference>
<dbReference type="NCBIfam" id="NF009895">
    <property type="entry name" value="PRK13352.1"/>
    <property type="match status" value="1"/>
</dbReference>
<dbReference type="NCBIfam" id="TIGR00190">
    <property type="entry name" value="thiC"/>
    <property type="match status" value="1"/>
</dbReference>
<dbReference type="PANTHER" id="PTHR30557:SF1">
    <property type="entry name" value="PHOSPHOMETHYLPYRIMIDINE SYNTHASE, CHLOROPLASTIC"/>
    <property type="match status" value="1"/>
</dbReference>
<dbReference type="PANTHER" id="PTHR30557">
    <property type="entry name" value="THIAMINE BIOSYNTHESIS PROTEIN THIC"/>
    <property type="match status" value="1"/>
</dbReference>
<dbReference type="Pfam" id="PF01964">
    <property type="entry name" value="ThiC_Rad_SAM"/>
    <property type="match status" value="1"/>
</dbReference>
<dbReference type="SFLD" id="SFLDF00407">
    <property type="entry name" value="phosphomethylpyrimidine_syntha"/>
    <property type="match status" value="1"/>
</dbReference>
<dbReference type="SFLD" id="SFLDG01114">
    <property type="entry name" value="phosphomethylpyrimidine_syntha"/>
    <property type="match status" value="1"/>
</dbReference>
<dbReference type="SFLD" id="SFLDS00113">
    <property type="entry name" value="Radical_SAM_Phosphomethylpyrim"/>
    <property type="match status" value="1"/>
</dbReference>
<keyword id="KW-0004">4Fe-4S</keyword>
<keyword id="KW-0408">Iron</keyword>
<keyword id="KW-0411">Iron-sulfur</keyword>
<keyword id="KW-0456">Lyase</keyword>
<keyword id="KW-0479">Metal-binding</keyword>
<keyword id="KW-1185">Reference proteome</keyword>
<keyword id="KW-0949">S-adenosyl-L-methionine</keyword>
<keyword id="KW-0784">Thiamine biosynthesis</keyword>
<keyword id="KW-0862">Zinc</keyword>
<gene>
    <name evidence="1" type="primary">thiC</name>
    <name type="ordered locus">NT01CX_0092</name>
</gene>
<evidence type="ECO:0000255" key="1">
    <source>
        <dbReference type="HAMAP-Rule" id="MF_00089"/>
    </source>
</evidence>
<accession>A0Q1U9</accession>
<organism>
    <name type="scientific">Clostridium novyi (strain NT)</name>
    <dbReference type="NCBI Taxonomy" id="386415"/>
    <lineage>
        <taxon>Bacteria</taxon>
        <taxon>Bacillati</taxon>
        <taxon>Bacillota</taxon>
        <taxon>Clostridia</taxon>
        <taxon>Eubacteriales</taxon>
        <taxon>Clostridiaceae</taxon>
        <taxon>Clostridium</taxon>
    </lineage>
</organism>
<proteinExistence type="inferred from homology"/>
<protein>
    <recommendedName>
        <fullName evidence="1">Phosphomethylpyrimidine synthase</fullName>
        <ecNumber evidence="1">4.1.99.17</ecNumber>
    </recommendedName>
    <alternativeName>
        <fullName evidence="1">Hydroxymethylpyrimidine phosphate synthase</fullName>
        <shortName evidence="1">HMP-P synthase</shortName>
        <shortName evidence="1">HMP-phosphate synthase</shortName>
        <shortName evidence="1">HMPP synthase</shortName>
    </alternativeName>
    <alternativeName>
        <fullName evidence="1">Thiamine biosynthesis protein ThiC</fullName>
    </alternativeName>
</protein>
<reference key="1">
    <citation type="journal article" date="2006" name="Nat. Biotechnol.">
        <title>The genome and transcriptomes of the anti-tumor agent Clostridium novyi-NT.</title>
        <authorList>
            <person name="Bettegowda C."/>
            <person name="Huang X."/>
            <person name="Lin J."/>
            <person name="Cheong I."/>
            <person name="Kohli M."/>
            <person name="Szabo S.A."/>
            <person name="Zhang X."/>
            <person name="Diaz L.A. Jr."/>
            <person name="Velculescu V.E."/>
            <person name="Parmigiani G."/>
            <person name="Kinzler K.W."/>
            <person name="Vogelstein B."/>
            <person name="Zhou S."/>
        </authorList>
    </citation>
    <scope>NUCLEOTIDE SEQUENCE [LARGE SCALE GENOMIC DNA]</scope>
    <source>
        <strain>NT</strain>
    </source>
</reference>